<organism>
    <name type="scientific">Deinococcus deserti (strain DSM 17065 / CIP 109153 / LMG 22923 / VCD115)</name>
    <dbReference type="NCBI Taxonomy" id="546414"/>
    <lineage>
        <taxon>Bacteria</taxon>
        <taxon>Thermotogati</taxon>
        <taxon>Deinococcota</taxon>
        <taxon>Deinococci</taxon>
        <taxon>Deinococcales</taxon>
        <taxon>Deinococcaceae</taxon>
        <taxon>Deinococcus</taxon>
    </lineage>
</organism>
<protein>
    <recommendedName>
        <fullName evidence="1">Recombination protein RecR</fullName>
    </recommendedName>
</protein>
<evidence type="ECO:0000255" key="1">
    <source>
        <dbReference type="HAMAP-Rule" id="MF_00017"/>
    </source>
</evidence>
<sequence>MKYPPSLVSLIRELSRLPGIGPKSAQRLAFHLFEQPREDIERLAGALLAAKRDLHTCPVCFNITDAERCDVCSDPSRDQNLICVVEEPGDVIAIERSGEYRGLYHVLHGVLSPMNGVGPEKLHIKPLLPRVQEGQEIILATGTTVEGDATALYLQRLLEPLGAVVSRIAYGLPVGGALEYADEVTLGRALTGRQRVSK</sequence>
<accession>C1D0V5</accession>
<reference key="1">
    <citation type="journal article" date="2009" name="PLoS Genet.">
        <title>Alliance of proteomics and genomics to unravel the specificities of Sahara bacterium Deinococcus deserti.</title>
        <authorList>
            <person name="de Groot A."/>
            <person name="Dulermo R."/>
            <person name="Ortet P."/>
            <person name="Blanchard L."/>
            <person name="Guerin P."/>
            <person name="Fernandez B."/>
            <person name="Vacherie B."/>
            <person name="Dossat C."/>
            <person name="Jolivet E."/>
            <person name="Siguier P."/>
            <person name="Chandler M."/>
            <person name="Barakat M."/>
            <person name="Dedieu A."/>
            <person name="Barbe V."/>
            <person name="Heulin T."/>
            <person name="Sommer S."/>
            <person name="Achouak W."/>
            <person name="Armengaud J."/>
        </authorList>
    </citation>
    <scope>NUCLEOTIDE SEQUENCE [LARGE SCALE GENOMIC DNA]</scope>
    <source>
        <strain>DSM 17065 / CIP 109153 / LMG 22923 / VCD115</strain>
    </source>
</reference>
<dbReference type="EMBL" id="CP001114">
    <property type="protein sequence ID" value="ACO45479.1"/>
    <property type="molecule type" value="Genomic_DNA"/>
</dbReference>
<dbReference type="RefSeq" id="WP_012692602.1">
    <property type="nucleotide sequence ID" value="NC_012526.1"/>
</dbReference>
<dbReference type="SMR" id="C1D0V5"/>
<dbReference type="STRING" id="546414.Deide_06340"/>
<dbReference type="PaxDb" id="546414-Deide_06340"/>
<dbReference type="KEGG" id="ddr:Deide_06340"/>
<dbReference type="eggNOG" id="COG0353">
    <property type="taxonomic scope" value="Bacteria"/>
</dbReference>
<dbReference type="HOGENOM" id="CLU_060739_1_0_0"/>
<dbReference type="OrthoDB" id="9802672at2"/>
<dbReference type="Proteomes" id="UP000002208">
    <property type="component" value="Chromosome"/>
</dbReference>
<dbReference type="GO" id="GO:0003677">
    <property type="term" value="F:DNA binding"/>
    <property type="evidence" value="ECO:0007669"/>
    <property type="project" value="UniProtKB-UniRule"/>
</dbReference>
<dbReference type="GO" id="GO:0008270">
    <property type="term" value="F:zinc ion binding"/>
    <property type="evidence" value="ECO:0007669"/>
    <property type="project" value="UniProtKB-KW"/>
</dbReference>
<dbReference type="GO" id="GO:0006310">
    <property type="term" value="P:DNA recombination"/>
    <property type="evidence" value="ECO:0007669"/>
    <property type="project" value="UniProtKB-UniRule"/>
</dbReference>
<dbReference type="GO" id="GO:0006281">
    <property type="term" value="P:DNA repair"/>
    <property type="evidence" value="ECO:0007669"/>
    <property type="project" value="UniProtKB-UniRule"/>
</dbReference>
<dbReference type="CDD" id="cd01025">
    <property type="entry name" value="TOPRIM_recR"/>
    <property type="match status" value="1"/>
</dbReference>
<dbReference type="FunFam" id="1.10.8.420:FF:000001">
    <property type="entry name" value="Recombination protein RecR"/>
    <property type="match status" value="1"/>
</dbReference>
<dbReference type="Gene3D" id="3.30.60.80">
    <property type="match status" value="1"/>
</dbReference>
<dbReference type="Gene3D" id="3.40.1360.10">
    <property type="match status" value="1"/>
</dbReference>
<dbReference type="Gene3D" id="6.10.250.240">
    <property type="match status" value="1"/>
</dbReference>
<dbReference type="Gene3D" id="1.10.8.420">
    <property type="entry name" value="RecR Domain 1"/>
    <property type="match status" value="1"/>
</dbReference>
<dbReference type="HAMAP" id="MF_00017">
    <property type="entry name" value="RecR"/>
    <property type="match status" value="1"/>
</dbReference>
<dbReference type="InterPro" id="IPR000093">
    <property type="entry name" value="DNA_Rcmb_RecR"/>
</dbReference>
<dbReference type="InterPro" id="IPR003583">
    <property type="entry name" value="Hlx-hairpin-Hlx_DNA-bd_motif"/>
</dbReference>
<dbReference type="InterPro" id="IPR023627">
    <property type="entry name" value="Rcmb_RecR"/>
</dbReference>
<dbReference type="InterPro" id="IPR015967">
    <property type="entry name" value="Rcmb_RecR_Znf"/>
</dbReference>
<dbReference type="InterPro" id="IPR006171">
    <property type="entry name" value="TOPRIM_dom"/>
</dbReference>
<dbReference type="InterPro" id="IPR034137">
    <property type="entry name" value="TOPRIM_RecR"/>
</dbReference>
<dbReference type="NCBIfam" id="TIGR00615">
    <property type="entry name" value="recR"/>
    <property type="match status" value="1"/>
</dbReference>
<dbReference type="PANTHER" id="PTHR30446">
    <property type="entry name" value="RECOMBINATION PROTEIN RECR"/>
    <property type="match status" value="1"/>
</dbReference>
<dbReference type="PANTHER" id="PTHR30446:SF0">
    <property type="entry name" value="RECOMBINATION PROTEIN RECR"/>
    <property type="match status" value="1"/>
</dbReference>
<dbReference type="Pfam" id="PF21175">
    <property type="entry name" value="RecR_C"/>
    <property type="match status" value="1"/>
</dbReference>
<dbReference type="Pfam" id="PF21176">
    <property type="entry name" value="RecR_HhH"/>
    <property type="match status" value="1"/>
</dbReference>
<dbReference type="Pfam" id="PF02132">
    <property type="entry name" value="RecR_ZnF"/>
    <property type="match status" value="1"/>
</dbReference>
<dbReference type="Pfam" id="PF13662">
    <property type="entry name" value="Toprim_4"/>
    <property type="match status" value="1"/>
</dbReference>
<dbReference type="SMART" id="SM00278">
    <property type="entry name" value="HhH1"/>
    <property type="match status" value="1"/>
</dbReference>
<dbReference type="SMART" id="SM00493">
    <property type="entry name" value="TOPRIM"/>
    <property type="match status" value="1"/>
</dbReference>
<dbReference type="SUPFAM" id="SSF111304">
    <property type="entry name" value="Recombination protein RecR"/>
    <property type="match status" value="1"/>
</dbReference>
<dbReference type="PROSITE" id="PS01300">
    <property type="entry name" value="RECR"/>
    <property type="match status" value="1"/>
</dbReference>
<dbReference type="PROSITE" id="PS50880">
    <property type="entry name" value="TOPRIM"/>
    <property type="match status" value="1"/>
</dbReference>
<proteinExistence type="inferred from homology"/>
<feature type="chain" id="PRO_1000201855" description="Recombination protein RecR">
    <location>
        <begin position="1"/>
        <end position="198"/>
    </location>
</feature>
<feature type="domain" description="Toprim" evidence="1">
    <location>
        <begin position="80"/>
        <end position="173"/>
    </location>
</feature>
<feature type="zinc finger region" description="C4-type" evidence="1">
    <location>
        <begin position="57"/>
        <end position="72"/>
    </location>
</feature>
<gene>
    <name evidence="1" type="primary">recR</name>
    <name type="ordered locus">Deide_06340</name>
</gene>
<comment type="function">
    <text evidence="1">May play a role in DNA repair. It seems to be involved in an RecBC-independent recombinational process of DNA repair. It may act with RecF and RecO.</text>
</comment>
<comment type="similarity">
    <text evidence="1">Belongs to the RecR family.</text>
</comment>
<name>RECR_DEIDV</name>
<keyword id="KW-0227">DNA damage</keyword>
<keyword id="KW-0233">DNA recombination</keyword>
<keyword id="KW-0234">DNA repair</keyword>
<keyword id="KW-0479">Metal-binding</keyword>
<keyword id="KW-1185">Reference proteome</keyword>
<keyword id="KW-0862">Zinc</keyword>
<keyword id="KW-0863">Zinc-finger</keyword>